<keyword id="KW-0030">Aminoacyl-tRNA synthetase</keyword>
<keyword id="KW-0067">ATP-binding</keyword>
<keyword id="KW-0963">Cytoplasm</keyword>
<keyword id="KW-0436">Ligase</keyword>
<keyword id="KW-0547">Nucleotide-binding</keyword>
<keyword id="KW-0648">Protein biosynthesis</keyword>
<name>SYGA_VIBPA</name>
<organism>
    <name type="scientific">Vibrio parahaemolyticus serotype O3:K6 (strain RIMD 2210633)</name>
    <dbReference type="NCBI Taxonomy" id="223926"/>
    <lineage>
        <taxon>Bacteria</taxon>
        <taxon>Pseudomonadati</taxon>
        <taxon>Pseudomonadota</taxon>
        <taxon>Gammaproteobacteria</taxon>
        <taxon>Vibrionales</taxon>
        <taxon>Vibrionaceae</taxon>
        <taxon>Vibrio</taxon>
    </lineage>
</organism>
<gene>
    <name evidence="1" type="primary">glyQ</name>
    <name type="ordered locus">VP0022</name>
</gene>
<accession>Q87TP7</accession>
<reference key="1">
    <citation type="journal article" date="2003" name="Lancet">
        <title>Genome sequence of Vibrio parahaemolyticus: a pathogenic mechanism distinct from that of V. cholerae.</title>
        <authorList>
            <person name="Makino K."/>
            <person name="Oshima K."/>
            <person name="Kurokawa K."/>
            <person name="Yokoyama K."/>
            <person name="Uda T."/>
            <person name="Tagomori K."/>
            <person name="Iijima Y."/>
            <person name="Najima M."/>
            <person name="Nakano M."/>
            <person name="Yamashita A."/>
            <person name="Kubota Y."/>
            <person name="Kimura S."/>
            <person name="Yasunaga T."/>
            <person name="Honda T."/>
            <person name="Shinagawa H."/>
            <person name="Hattori M."/>
            <person name="Iida T."/>
        </authorList>
    </citation>
    <scope>NUCLEOTIDE SEQUENCE [LARGE SCALE GENOMIC DNA]</scope>
    <source>
        <strain>RIMD 2210633</strain>
    </source>
</reference>
<protein>
    <recommendedName>
        <fullName evidence="1">Glycine--tRNA ligase alpha subunit</fullName>
        <ecNumber evidence="1">6.1.1.14</ecNumber>
    </recommendedName>
    <alternativeName>
        <fullName evidence="1">Glycyl-tRNA synthetase alpha subunit</fullName>
        <shortName evidence="1">GlyRS</shortName>
    </alternativeName>
</protein>
<feature type="chain" id="PRO_0000072879" description="Glycine--tRNA ligase alpha subunit">
    <location>
        <begin position="1"/>
        <end position="305"/>
    </location>
</feature>
<comment type="catalytic activity">
    <reaction evidence="1">
        <text>tRNA(Gly) + glycine + ATP = glycyl-tRNA(Gly) + AMP + diphosphate</text>
        <dbReference type="Rhea" id="RHEA:16013"/>
        <dbReference type="Rhea" id="RHEA-COMP:9664"/>
        <dbReference type="Rhea" id="RHEA-COMP:9683"/>
        <dbReference type="ChEBI" id="CHEBI:30616"/>
        <dbReference type="ChEBI" id="CHEBI:33019"/>
        <dbReference type="ChEBI" id="CHEBI:57305"/>
        <dbReference type="ChEBI" id="CHEBI:78442"/>
        <dbReference type="ChEBI" id="CHEBI:78522"/>
        <dbReference type="ChEBI" id="CHEBI:456215"/>
        <dbReference type="EC" id="6.1.1.14"/>
    </reaction>
</comment>
<comment type="subunit">
    <text evidence="1">Tetramer of two alpha and two beta subunits.</text>
</comment>
<comment type="subcellular location">
    <subcellularLocation>
        <location evidence="1">Cytoplasm</location>
    </subcellularLocation>
</comment>
<comment type="similarity">
    <text evidence="1">Belongs to the class-II aminoacyl-tRNA synthetase family.</text>
</comment>
<sequence>MQKYDIKTFQGMILALQDYWAQNGCTIVQPLDMEVGAGTSHPMTCLRALGPEPMSTAYVQPSRRPTDGRYGENPNRLQHYYQFQVALKPSPDNIQELYLGSLEVLGIDPLVHDIRFVEDNWENPTLGAWGLGWEVWLNGMEVTQFTYFQQVGGLECKPVTGEITYGIERLAMYIQEVDSVYDLTWNIAPDGSKVTYGDIFHQNEVEQSTYNFEHADVDFLFSFFDQCEKESKELLELEKPLPLPAYERILKAAHAFNLLDARKAISVTERQRYILRIRNLTKAVAEAYYASREALGFPMCKKEQA</sequence>
<dbReference type="EC" id="6.1.1.14" evidence="1"/>
<dbReference type="EMBL" id="BA000031">
    <property type="protein sequence ID" value="BAC58285.1"/>
    <property type="molecule type" value="Genomic_DNA"/>
</dbReference>
<dbReference type="RefSeq" id="NP_796401.1">
    <property type="nucleotide sequence ID" value="NC_004603.1"/>
</dbReference>
<dbReference type="RefSeq" id="WP_005458688.1">
    <property type="nucleotide sequence ID" value="NC_004603.1"/>
</dbReference>
<dbReference type="SMR" id="Q87TP7"/>
<dbReference type="GeneID" id="1187478"/>
<dbReference type="KEGG" id="vpa:VP0022"/>
<dbReference type="PATRIC" id="fig|223926.6.peg.22"/>
<dbReference type="eggNOG" id="COG0752">
    <property type="taxonomic scope" value="Bacteria"/>
</dbReference>
<dbReference type="HOGENOM" id="CLU_057066_1_0_6"/>
<dbReference type="Proteomes" id="UP000002493">
    <property type="component" value="Chromosome 1"/>
</dbReference>
<dbReference type="GO" id="GO:0005829">
    <property type="term" value="C:cytosol"/>
    <property type="evidence" value="ECO:0007669"/>
    <property type="project" value="TreeGrafter"/>
</dbReference>
<dbReference type="GO" id="GO:0005524">
    <property type="term" value="F:ATP binding"/>
    <property type="evidence" value="ECO:0007669"/>
    <property type="project" value="UniProtKB-UniRule"/>
</dbReference>
<dbReference type="GO" id="GO:0004820">
    <property type="term" value="F:glycine-tRNA ligase activity"/>
    <property type="evidence" value="ECO:0007669"/>
    <property type="project" value="UniProtKB-UniRule"/>
</dbReference>
<dbReference type="GO" id="GO:0006426">
    <property type="term" value="P:glycyl-tRNA aminoacylation"/>
    <property type="evidence" value="ECO:0007669"/>
    <property type="project" value="UniProtKB-UniRule"/>
</dbReference>
<dbReference type="CDD" id="cd00733">
    <property type="entry name" value="GlyRS_alpha_core"/>
    <property type="match status" value="1"/>
</dbReference>
<dbReference type="FunFam" id="3.30.930.10:FF:000006">
    <property type="entry name" value="Glycine--tRNA ligase alpha subunit"/>
    <property type="match status" value="1"/>
</dbReference>
<dbReference type="Gene3D" id="3.30.930.10">
    <property type="entry name" value="Bira Bifunctional Protein, Domain 2"/>
    <property type="match status" value="1"/>
</dbReference>
<dbReference type="Gene3D" id="1.20.58.180">
    <property type="entry name" value="Class II aaRS and biotin synthetases, domain 2"/>
    <property type="match status" value="1"/>
</dbReference>
<dbReference type="HAMAP" id="MF_00254">
    <property type="entry name" value="Gly_tRNA_synth_alpha"/>
    <property type="match status" value="1"/>
</dbReference>
<dbReference type="InterPro" id="IPR045864">
    <property type="entry name" value="aa-tRNA-synth_II/BPL/LPL"/>
</dbReference>
<dbReference type="InterPro" id="IPR006194">
    <property type="entry name" value="Gly-tRNA-synth_heterodimer"/>
</dbReference>
<dbReference type="InterPro" id="IPR002310">
    <property type="entry name" value="Gly-tRNA_ligase_asu"/>
</dbReference>
<dbReference type="NCBIfam" id="TIGR00388">
    <property type="entry name" value="glyQ"/>
    <property type="match status" value="1"/>
</dbReference>
<dbReference type="NCBIfam" id="NF006827">
    <property type="entry name" value="PRK09348.1"/>
    <property type="match status" value="1"/>
</dbReference>
<dbReference type="PANTHER" id="PTHR30075:SF2">
    <property type="entry name" value="GLYCINE--TRNA LIGASE, CHLOROPLASTIC_MITOCHONDRIAL 2"/>
    <property type="match status" value="1"/>
</dbReference>
<dbReference type="PANTHER" id="PTHR30075">
    <property type="entry name" value="GLYCYL-TRNA SYNTHETASE"/>
    <property type="match status" value="1"/>
</dbReference>
<dbReference type="Pfam" id="PF02091">
    <property type="entry name" value="tRNA-synt_2e"/>
    <property type="match status" value="1"/>
</dbReference>
<dbReference type="PRINTS" id="PR01044">
    <property type="entry name" value="TRNASYNTHGA"/>
</dbReference>
<dbReference type="SUPFAM" id="SSF55681">
    <property type="entry name" value="Class II aaRS and biotin synthetases"/>
    <property type="match status" value="1"/>
</dbReference>
<dbReference type="PROSITE" id="PS50861">
    <property type="entry name" value="AA_TRNA_LIGASE_II_GLYAB"/>
    <property type="match status" value="1"/>
</dbReference>
<proteinExistence type="inferred from homology"/>
<evidence type="ECO:0000255" key="1">
    <source>
        <dbReference type="HAMAP-Rule" id="MF_00254"/>
    </source>
</evidence>